<comment type="function">
    <text evidence="3 4 5">Repair polymerase. Involved in gap-filling in DNA nonhomologous end joining (NHEJ) required for double-strand break repair. Seems to conduct DNA synthesis in a stepwise distributive fashion rather than in a processive fashion as for other DNA polymerases. Preferentially acts upon short gaps formed by the alignment of linear duplexes with complementary single-strand ends. Required for filling gaps that need removal of a 5'- or 3'-terminal mismatch, however lacks nuclease activities.</text>
</comment>
<comment type="catalytic activity">
    <reaction>
        <text>DNA(n) + a 2'-deoxyribonucleoside 5'-triphosphate = DNA(n+1) + diphosphate</text>
        <dbReference type="Rhea" id="RHEA:22508"/>
        <dbReference type="Rhea" id="RHEA-COMP:17339"/>
        <dbReference type="Rhea" id="RHEA-COMP:17340"/>
        <dbReference type="ChEBI" id="CHEBI:33019"/>
        <dbReference type="ChEBI" id="CHEBI:61560"/>
        <dbReference type="ChEBI" id="CHEBI:173112"/>
        <dbReference type="EC" id="2.7.7.7"/>
    </reaction>
</comment>
<comment type="cofactor">
    <cofactor evidence="1">
        <name>Mg(2+)</name>
        <dbReference type="ChEBI" id="CHEBI:18420"/>
    </cofactor>
</comment>
<comment type="activity regulation">
    <text evidence="4">Stimulated by the interaction with the DNL4-LIF1 complex.</text>
</comment>
<comment type="subunit">
    <text evidence="4">Interacts with DNL4 subunit of the DNL4-LIF1 complex.</text>
</comment>
<comment type="subcellular location">
    <subcellularLocation>
        <location>Nucleus</location>
    </subcellularLocation>
</comment>
<comment type="induction">
    <text evidence="5">During meiosis.</text>
</comment>
<comment type="similarity">
    <text evidence="7">Belongs to the DNA polymerase type-X family.</text>
</comment>
<dbReference type="EC" id="2.7.7.7"/>
<dbReference type="EMBL" id="X59720">
    <property type="protein sequence ID" value="CAA42331.2"/>
    <property type="molecule type" value="Genomic_DNA"/>
</dbReference>
<dbReference type="EMBL" id="BK006937">
    <property type="protein sequence ID" value="DAA07491.1"/>
    <property type="molecule type" value="Genomic_DNA"/>
</dbReference>
<dbReference type="PIR" id="S19424">
    <property type="entry name" value="S19424"/>
</dbReference>
<dbReference type="RefSeq" id="NP_009940.2">
    <property type="nucleotide sequence ID" value="NM_001178727.1"/>
</dbReference>
<dbReference type="SMR" id="P25615"/>
<dbReference type="BioGRID" id="30992">
    <property type="interactions" value="88"/>
</dbReference>
<dbReference type="DIP" id="DIP-4228N"/>
<dbReference type="FunCoup" id="P25615">
    <property type="interactions" value="333"/>
</dbReference>
<dbReference type="IntAct" id="P25615">
    <property type="interactions" value="10"/>
</dbReference>
<dbReference type="MINT" id="P25615"/>
<dbReference type="STRING" id="4932.YCR014C"/>
<dbReference type="iPTMnet" id="P25615"/>
<dbReference type="PaxDb" id="4932-YCR014C"/>
<dbReference type="EnsemblFungi" id="YCR014C_mRNA">
    <property type="protein sequence ID" value="YCR014C"/>
    <property type="gene ID" value="YCR014C"/>
</dbReference>
<dbReference type="GeneID" id="850372"/>
<dbReference type="KEGG" id="sce:YCR014C"/>
<dbReference type="AGR" id="SGD:S000000607"/>
<dbReference type="SGD" id="S000000607">
    <property type="gene designation" value="POL4"/>
</dbReference>
<dbReference type="VEuPathDB" id="FungiDB:YCR014C"/>
<dbReference type="eggNOG" id="KOG2534">
    <property type="taxonomic scope" value="Eukaryota"/>
</dbReference>
<dbReference type="GeneTree" id="ENSGT00940000158515"/>
<dbReference type="HOGENOM" id="CLU_008698_3_1_1"/>
<dbReference type="InParanoid" id="P25615"/>
<dbReference type="OMA" id="DFFCCKW"/>
<dbReference type="OrthoDB" id="205514at2759"/>
<dbReference type="BioCyc" id="YEAST:G3O-29329-MONOMER"/>
<dbReference type="PRO" id="PR:P25615"/>
<dbReference type="Proteomes" id="UP000002311">
    <property type="component" value="Chromosome III"/>
</dbReference>
<dbReference type="RNAct" id="P25615">
    <property type="molecule type" value="protein"/>
</dbReference>
<dbReference type="GO" id="GO:0005634">
    <property type="term" value="C:nucleus"/>
    <property type="evidence" value="ECO:0000318"/>
    <property type="project" value="GO_Central"/>
</dbReference>
<dbReference type="GO" id="GO:0003677">
    <property type="term" value="F:DNA binding"/>
    <property type="evidence" value="ECO:0007669"/>
    <property type="project" value="InterPro"/>
</dbReference>
<dbReference type="GO" id="GO:0003887">
    <property type="term" value="F:DNA-directed DNA polymerase activity"/>
    <property type="evidence" value="ECO:0000314"/>
    <property type="project" value="SGD"/>
</dbReference>
<dbReference type="GO" id="GO:0046872">
    <property type="term" value="F:metal ion binding"/>
    <property type="evidence" value="ECO:0007669"/>
    <property type="project" value="UniProtKB-KW"/>
</dbReference>
<dbReference type="GO" id="GO:0006284">
    <property type="term" value="P:base-excision repair"/>
    <property type="evidence" value="ECO:0000318"/>
    <property type="project" value="GO_Central"/>
</dbReference>
<dbReference type="GO" id="GO:0006302">
    <property type="term" value="P:double-strand break repair"/>
    <property type="evidence" value="ECO:0000314"/>
    <property type="project" value="SGD"/>
</dbReference>
<dbReference type="GO" id="GO:0006303">
    <property type="term" value="P:double-strand break repair via nonhomologous end joining"/>
    <property type="evidence" value="ECO:0000314"/>
    <property type="project" value="SGD"/>
</dbReference>
<dbReference type="CDD" id="cd00141">
    <property type="entry name" value="NT_POLXc"/>
    <property type="match status" value="1"/>
</dbReference>
<dbReference type="FunFam" id="1.10.150.110:FF:000010">
    <property type="entry name" value="DNA polymerase"/>
    <property type="match status" value="1"/>
</dbReference>
<dbReference type="Gene3D" id="3.30.460.10">
    <property type="entry name" value="Beta Polymerase, domain 2"/>
    <property type="match status" value="1"/>
</dbReference>
<dbReference type="Gene3D" id="1.10.150.110">
    <property type="entry name" value="DNA polymerase beta, N-terminal domain-like"/>
    <property type="match status" value="1"/>
</dbReference>
<dbReference type="Gene3D" id="3.30.210.10">
    <property type="entry name" value="DNA polymerase, thumb domain"/>
    <property type="match status" value="1"/>
</dbReference>
<dbReference type="InterPro" id="IPR002054">
    <property type="entry name" value="DNA-dir_DNA_pol_X"/>
</dbReference>
<dbReference type="InterPro" id="IPR019843">
    <property type="entry name" value="DNA_pol-X_BS"/>
</dbReference>
<dbReference type="InterPro" id="IPR010996">
    <property type="entry name" value="DNA_pol_b-like_N"/>
</dbReference>
<dbReference type="InterPro" id="IPR028207">
    <property type="entry name" value="DNA_pol_B_palm_palm"/>
</dbReference>
<dbReference type="InterPro" id="IPR027421">
    <property type="entry name" value="DNA_pol_lamdba_lyase_dom_sf"/>
</dbReference>
<dbReference type="InterPro" id="IPR037160">
    <property type="entry name" value="DNA_Pol_thumb_sf"/>
</dbReference>
<dbReference type="InterPro" id="IPR022312">
    <property type="entry name" value="DNA_pol_X"/>
</dbReference>
<dbReference type="InterPro" id="IPR002008">
    <property type="entry name" value="DNA_pol_X_beta-like"/>
</dbReference>
<dbReference type="InterPro" id="IPR043519">
    <property type="entry name" value="NT_sf"/>
</dbReference>
<dbReference type="InterPro" id="IPR029398">
    <property type="entry name" value="PolB_thumb"/>
</dbReference>
<dbReference type="PANTHER" id="PTHR11276:SF42">
    <property type="entry name" value="DNA POLYMERASE BETA"/>
    <property type="match status" value="1"/>
</dbReference>
<dbReference type="PANTHER" id="PTHR11276">
    <property type="entry name" value="DNA POLYMERASE TYPE-X FAMILY MEMBER"/>
    <property type="match status" value="1"/>
</dbReference>
<dbReference type="Pfam" id="PF14792">
    <property type="entry name" value="DNA_pol_B_palm"/>
    <property type="match status" value="1"/>
</dbReference>
<dbReference type="Pfam" id="PF14791">
    <property type="entry name" value="DNA_pol_B_thumb"/>
    <property type="match status" value="1"/>
</dbReference>
<dbReference type="Pfam" id="PF14716">
    <property type="entry name" value="HHH_8"/>
    <property type="match status" value="1"/>
</dbReference>
<dbReference type="PRINTS" id="PR00869">
    <property type="entry name" value="DNAPOLX"/>
</dbReference>
<dbReference type="PRINTS" id="PR00870">
    <property type="entry name" value="DNAPOLXBETA"/>
</dbReference>
<dbReference type="SMART" id="SM00483">
    <property type="entry name" value="POLXc"/>
    <property type="match status" value="1"/>
</dbReference>
<dbReference type="SUPFAM" id="SSF47802">
    <property type="entry name" value="DNA polymerase beta, N-terminal domain-like"/>
    <property type="match status" value="1"/>
</dbReference>
<dbReference type="SUPFAM" id="SSF81301">
    <property type="entry name" value="Nucleotidyltransferase"/>
    <property type="match status" value="1"/>
</dbReference>
<dbReference type="PROSITE" id="PS00522">
    <property type="entry name" value="DNA_POLYMERASE_X"/>
    <property type="match status" value="1"/>
</dbReference>
<proteinExistence type="evidence at protein level"/>
<accession>P25615</accession>
<accession>D6VR22</accession>
<name>DPO4_YEAST</name>
<gene>
    <name type="primary">POL4</name>
    <name type="synonym">POLX</name>
    <name type="ordered locus">YCR014C</name>
    <name type="ORF">YCR14C</name>
</gene>
<reference key="1">
    <citation type="journal article" date="1992" name="Nature">
        <title>The complete DNA sequence of yeast chromosome III.</title>
        <authorList>
            <person name="Oliver S.G."/>
            <person name="van der Aart Q.J.M."/>
            <person name="Agostoni-Carbone M.L."/>
            <person name="Aigle M."/>
            <person name="Alberghina L."/>
            <person name="Alexandraki D."/>
            <person name="Antoine G."/>
            <person name="Anwar R."/>
            <person name="Ballesta J.P.G."/>
            <person name="Benit P."/>
            <person name="Berben G."/>
            <person name="Bergantino E."/>
            <person name="Biteau N."/>
            <person name="Bolle P.-A."/>
            <person name="Bolotin-Fukuhara M."/>
            <person name="Brown A."/>
            <person name="Brown A.J.P."/>
            <person name="Buhler J.-M."/>
            <person name="Carcano C."/>
            <person name="Carignani G."/>
            <person name="Cederberg H."/>
            <person name="Chanet R."/>
            <person name="Contreras R."/>
            <person name="Crouzet M."/>
            <person name="Daignan-Fornier B."/>
            <person name="Defoor E."/>
            <person name="Delgado M.D."/>
            <person name="Demolder J."/>
            <person name="Doira C."/>
            <person name="Dubois E."/>
            <person name="Dujon B."/>
            <person name="Duesterhoeft A."/>
            <person name="Erdmann D."/>
            <person name="Esteban M."/>
            <person name="Fabre F."/>
            <person name="Fairhead C."/>
            <person name="Faye G."/>
            <person name="Feldmann H."/>
            <person name="Fiers W."/>
            <person name="Francingues-Gaillard M.-C."/>
            <person name="Franco L."/>
            <person name="Frontali L."/>
            <person name="Fukuhara H."/>
            <person name="Fuller L.J."/>
            <person name="Galland P."/>
            <person name="Gent M.E."/>
            <person name="Gigot D."/>
            <person name="Gilliquet V."/>
            <person name="Glansdorff N."/>
            <person name="Goffeau A."/>
            <person name="Grenson M."/>
            <person name="Grisanti P."/>
            <person name="Grivell L.A."/>
            <person name="de Haan M."/>
            <person name="Haasemann M."/>
            <person name="Hatat D."/>
            <person name="Hoenicka J."/>
            <person name="Hegemann J.H."/>
            <person name="Herbert C.J."/>
            <person name="Hilger F."/>
            <person name="Hohmann S."/>
            <person name="Hollenberg C.P."/>
            <person name="Huse K."/>
            <person name="Iborra F."/>
            <person name="Indge K.J."/>
            <person name="Isono K."/>
            <person name="Jacq C."/>
            <person name="Jacquet M."/>
            <person name="James C.M."/>
            <person name="Jauniaux J.-C."/>
            <person name="Jia Y."/>
            <person name="Jimenez A."/>
            <person name="Kelly A."/>
            <person name="Kleinhans U."/>
            <person name="Kreisl P."/>
            <person name="Lanfranchi G."/>
            <person name="Lewis C."/>
            <person name="van der Linden C.G."/>
            <person name="Lucchini G."/>
            <person name="Lutzenkirchen K."/>
            <person name="Maat M.J."/>
            <person name="Mallet L."/>
            <person name="Mannhaupt G."/>
            <person name="Martegani E."/>
            <person name="Mathieu A."/>
            <person name="Maurer C.T.C."/>
            <person name="McConnell D."/>
            <person name="McKee R.A."/>
            <person name="Messenguy F."/>
            <person name="Mewes H.-W."/>
            <person name="Molemans F."/>
            <person name="Montague M.A."/>
            <person name="Muzi Falconi M."/>
            <person name="Navas L."/>
            <person name="Newlon C.S."/>
            <person name="Noone D."/>
            <person name="Pallier C."/>
            <person name="Panzeri L."/>
            <person name="Pearson B.M."/>
            <person name="Perea J."/>
            <person name="Philippsen P."/>
            <person name="Pierard A."/>
            <person name="Planta R.J."/>
            <person name="Plevani P."/>
            <person name="Poetsch B."/>
            <person name="Pohl F.M."/>
            <person name="Purnelle B."/>
            <person name="Ramezani Rad M."/>
            <person name="Rasmussen S.W."/>
            <person name="Raynal A."/>
            <person name="Remacha M.A."/>
            <person name="Richterich P."/>
            <person name="Roberts A.B."/>
            <person name="Rodriguez F."/>
            <person name="Sanz E."/>
            <person name="Schaaff-Gerstenschlaeger I."/>
            <person name="Scherens B."/>
            <person name="Schweitzer B."/>
            <person name="Shu Y."/>
            <person name="Skala J."/>
            <person name="Slonimski P.P."/>
            <person name="Sor F."/>
            <person name="Soustelle C."/>
            <person name="Spiegelberg R."/>
            <person name="Stateva L.I."/>
            <person name="Steensma H.Y."/>
            <person name="Steiner S."/>
            <person name="Thierry A."/>
            <person name="Thireos G."/>
            <person name="Tzermia M."/>
            <person name="Urrestarazu L.A."/>
            <person name="Valle G."/>
            <person name="Vetter I."/>
            <person name="van Vliet-Reedijk J.C."/>
            <person name="Voet M."/>
            <person name="Volckaert G."/>
            <person name="Vreken P."/>
            <person name="Wang H."/>
            <person name="Warmington J.R."/>
            <person name="von Wettstein D."/>
            <person name="Wicksteed B.L."/>
            <person name="Wilson C."/>
            <person name="Wurst H."/>
            <person name="Xu G."/>
            <person name="Yoshikawa A."/>
            <person name="Zimmermann F.K."/>
            <person name="Sgouros J.G."/>
        </authorList>
    </citation>
    <scope>NUCLEOTIDE SEQUENCE [LARGE SCALE GENOMIC DNA]</scope>
    <source>
        <strain>ATCC 204508 / S288c</strain>
    </source>
</reference>
<reference key="2">
    <citation type="submission" date="2001-06" db="EMBL/GenBank/DDBJ databases">
        <authorList>
            <person name="Valles G."/>
            <person name="Volckaerts G."/>
        </authorList>
    </citation>
    <scope>SEQUENCE REVISION TO 49; 171; 451 AND 482</scope>
</reference>
<reference key="3">
    <citation type="journal article" date="2014" name="G3 (Bethesda)">
        <title>The reference genome sequence of Saccharomyces cerevisiae: Then and now.</title>
        <authorList>
            <person name="Engel S.R."/>
            <person name="Dietrich F.S."/>
            <person name="Fisk D.G."/>
            <person name="Binkley G."/>
            <person name="Balakrishnan R."/>
            <person name="Costanzo M.C."/>
            <person name="Dwight S.S."/>
            <person name="Hitz B.C."/>
            <person name="Karra K."/>
            <person name="Nash R.S."/>
            <person name="Weng S."/>
            <person name="Wong E.D."/>
            <person name="Lloyd P."/>
            <person name="Skrzypek M.S."/>
            <person name="Miyasato S.R."/>
            <person name="Simison M."/>
            <person name="Cherry J.M."/>
        </authorList>
    </citation>
    <scope>GENOME REANNOTATION</scope>
    <source>
        <strain>ATCC 204508 / S288c</strain>
    </source>
</reference>
<reference key="4">
    <citation type="journal article" date="1992" name="Yeast">
        <title>The complete sequence of a 10.8 kb segment distal of SUF2 on the right arm of chromosome III from Saccharomyces cerevisiae reveals seven open reading frames including the RVS161, ADP1 and PGK genes.</title>
        <authorList>
            <person name="Skala J."/>
            <person name="Purnelle B."/>
            <person name="Goffeau A."/>
        </authorList>
    </citation>
    <scope>NUCLEOTIDE SEQUENCE [GENOMIC DNA] OF 303-582</scope>
</reference>
<reference key="5">
    <citation type="journal article" date="1993" name="Nucleic Acids Res.">
        <title>Yeast open reading frame YCR14C encodes a DNA beta-polymerase-like enzyme.</title>
        <authorList>
            <person name="Prasad R."/>
            <person name="Widen S.G."/>
            <person name="Singhal R.K."/>
            <person name="Watkins J."/>
            <person name="Prakash L."/>
            <person name="Wilson S.H."/>
        </authorList>
    </citation>
    <scope>CHARACTERIZATION</scope>
    <scope>PROTEIN SEQUENCE OF 2-15</scope>
</reference>
<reference key="6">
    <citation type="journal article" date="1994" name="Nucleic Acids Res.">
        <title>The yeast Saccharomyces cerevisiae DNA polymerase IV: possible involvement in double strand break DNA repair.</title>
        <authorList>
            <person name="Leem S.-H."/>
            <person name="Ropp P.A."/>
            <person name="Sugino A."/>
        </authorList>
    </citation>
    <scope>PROTEIN SEQUENCE OF 67-79; 138-149; 287-299; 342-356 AND 365-373</scope>
    <scope>FUNCTION</scope>
    <scope>INDUCTION</scope>
</reference>
<reference key="7">
    <citation type="journal article" date="2002" name="J. Biol. Chem.">
        <title>A physical and functional interaction between yeast Pol4 and Dnl4-Lif1 links DNA synthesis and ligation in nonhomologous end joining.</title>
        <authorList>
            <person name="Tseng H.-M."/>
            <person name="Tomkinson A.E."/>
        </authorList>
    </citation>
    <scope>FUNCTION</scope>
    <scope>ACTIVITY REGULATION</scope>
    <scope>INTERACTION WITH THE DNL4-LIF1 COMPLEX</scope>
</reference>
<reference key="8">
    <citation type="journal article" date="1999" name="J. Biol. Chem.">
        <title>Efficient processing of DNA ends during yeast nonhomologous end joining. Evidence for a DNA polymerase beta (Pol4)-dependent pathway.</title>
        <authorList>
            <person name="Wilson T.E."/>
            <person name="Lieber M.R."/>
        </authorList>
    </citation>
    <scope>FUNCTION</scope>
    <scope>MUTAGENESIS OF LYS-247; LYS-248 AND ASP-367</scope>
</reference>
<reference key="9">
    <citation type="journal article" date="1992" name="Protein Sci.">
        <title>Comprehensive sequence analysis of the 182 predicted open reading frames of yeast chromosome III.</title>
        <authorList>
            <person name="Bork P."/>
            <person name="Ouzounis C."/>
            <person name="Sander C."/>
            <person name="Scharf M."/>
            <person name="Schneider R."/>
            <person name="Sonnhammer E."/>
        </authorList>
    </citation>
    <scope>SIMILARITY TO DNA POLYMERASE TYPE-X FAMILY</scope>
</reference>
<protein>
    <recommendedName>
        <fullName>DNA polymerase IV</fullName>
        <shortName>POL IV</shortName>
        <ecNumber>2.7.7.7</ecNumber>
    </recommendedName>
</protein>
<sequence length="582" mass="67527">MSLKGKFFAFLPNPNTSSNKFFKSILEKKGATIVSSIQNCLQSSRKEVVILIEDSFVDSDMHLTQKDIFQREAGLNDVDEFLGKIEQSGIQCVKTSCITKWVQNDKFAFQKDDLIKFQPSIIVISDNADDGQSSTDKESEISTDVESERNDDSNNKDMIQASKPLKRLLQGDKGRASLVTDKTKYKNNELIIGALKRLTKKYEIEGEKFRARSYRLAKQSMENCDFNVRSGEEAHTKLRNIGPSIAKKIQVILDTGVLPGLNDSVGLEDKLKYFKNCYGIGSEIAKRWNLLNFESFCVAAKKDPEEFVSDWTILFGWSYYDDWLCKMSRNECFTHLKKVQKALRGIDPECQVELQGSYNRGYSKCGDIDLLFFKPFCNDTTELAKIMETLCIKLYKDGYIHCFLQLTPNLEKLFLKRIVERFRTAKIVGYGERKRWYSSEIIKKFFMGVKLSPRELEELKEMKNDEGTLLIEEEEEEETKLKPIDQYMSLNAKDGNYCRRLDFFCCKWDELGAGRIHYTGSKEYNRWIRILAAQKGFKLTQHGLFRNNILLESFNERRIFELLNLKYAEPEHRNIEWEKKTA</sequence>
<feature type="initiator methionine" description="Removed" evidence="6">
    <location>
        <position position="1"/>
    </location>
</feature>
<feature type="chain" id="PRO_0000218789" description="DNA polymerase IV">
    <location>
        <begin position="2"/>
        <end position="582"/>
    </location>
</feature>
<feature type="region of interest" description="Disordered" evidence="2">
    <location>
        <begin position="127"/>
        <end position="161"/>
    </location>
</feature>
<feature type="region of interest" description="Involved in ssDNA binding" evidence="1">
    <location>
        <begin position="360"/>
        <end position="369"/>
    </location>
</feature>
<feature type="compositionally biased region" description="Basic and acidic residues" evidence="2">
    <location>
        <begin position="135"/>
        <end position="155"/>
    </location>
</feature>
<feature type="binding site" evidence="1">
    <location>
        <position position="367"/>
    </location>
    <ligand>
        <name>Mg(2+)</name>
        <dbReference type="ChEBI" id="CHEBI:18420"/>
    </ligand>
</feature>
<feature type="binding site" evidence="1">
    <location>
        <position position="369"/>
    </location>
    <ligand>
        <name>Mg(2+)</name>
        <dbReference type="ChEBI" id="CHEBI:18420"/>
    </ligand>
</feature>
<feature type="binding site" evidence="1">
    <location>
        <position position="502"/>
    </location>
    <ligand>
        <name>Mg(2+)</name>
        <dbReference type="ChEBI" id="CHEBI:18420"/>
    </ligand>
</feature>
<feature type="mutagenesis site" description="Weakened DNA-binding." evidence="3">
    <original>K</original>
    <variation>R</variation>
    <location>
        <position position="247"/>
    </location>
</feature>
<feature type="mutagenesis site" description="Weakened DNA-binding." evidence="3">
    <original>K</original>
    <variation>R</variation>
    <location>
        <position position="248"/>
    </location>
</feature>
<feature type="mutagenesis site" description="Loss of nucleotidyl transfer." evidence="3">
    <original>D</original>
    <variation>E</variation>
    <location>
        <position position="367"/>
    </location>
</feature>
<keyword id="KW-0903">Direct protein sequencing</keyword>
<keyword id="KW-0227">DNA damage</keyword>
<keyword id="KW-0234">DNA repair</keyword>
<keyword id="KW-0239">DNA-directed DNA polymerase</keyword>
<keyword id="KW-0460">Magnesium</keyword>
<keyword id="KW-0479">Metal-binding</keyword>
<keyword id="KW-0548">Nucleotidyltransferase</keyword>
<keyword id="KW-0539">Nucleus</keyword>
<keyword id="KW-1185">Reference proteome</keyword>
<keyword id="KW-0808">Transferase</keyword>
<evidence type="ECO:0000250" key="1"/>
<evidence type="ECO:0000256" key="2">
    <source>
        <dbReference type="SAM" id="MobiDB-lite"/>
    </source>
</evidence>
<evidence type="ECO:0000269" key="3">
    <source>
    </source>
</evidence>
<evidence type="ECO:0000269" key="4">
    <source>
    </source>
</evidence>
<evidence type="ECO:0000269" key="5">
    <source>
    </source>
</evidence>
<evidence type="ECO:0000269" key="6">
    <source>
    </source>
</evidence>
<evidence type="ECO:0000305" key="7"/>
<organism>
    <name type="scientific">Saccharomyces cerevisiae (strain ATCC 204508 / S288c)</name>
    <name type="common">Baker's yeast</name>
    <dbReference type="NCBI Taxonomy" id="559292"/>
    <lineage>
        <taxon>Eukaryota</taxon>
        <taxon>Fungi</taxon>
        <taxon>Dikarya</taxon>
        <taxon>Ascomycota</taxon>
        <taxon>Saccharomycotina</taxon>
        <taxon>Saccharomycetes</taxon>
        <taxon>Saccharomycetales</taxon>
        <taxon>Saccharomycetaceae</taxon>
        <taxon>Saccharomyces</taxon>
    </lineage>
</organism>